<dbReference type="EMBL" id="AE017220">
    <property type="protein sequence ID" value="AAX66399.1"/>
    <property type="molecule type" value="Genomic_DNA"/>
</dbReference>
<dbReference type="SMR" id="Q57LL3"/>
<dbReference type="KEGG" id="sec:SCH_2493"/>
<dbReference type="HOGENOM" id="CLU_072265_1_1_6"/>
<dbReference type="Proteomes" id="UP000000538">
    <property type="component" value="Chromosome"/>
</dbReference>
<dbReference type="GO" id="GO:0006270">
    <property type="term" value="P:DNA replication initiation"/>
    <property type="evidence" value="ECO:0007669"/>
    <property type="project" value="TreeGrafter"/>
</dbReference>
<dbReference type="GO" id="GO:0032297">
    <property type="term" value="P:negative regulation of DNA-templated DNA replication initiation"/>
    <property type="evidence" value="ECO:0007669"/>
    <property type="project" value="InterPro"/>
</dbReference>
<dbReference type="FunFam" id="1.10.8.60:FF:000024">
    <property type="entry name" value="DnaA regulatory inactivator Hda"/>
    <property type="match status" value="1"/>
</dbReference>
<dbReference type="FunFam" id="3.40.50.300:FF:000452">
    <property type="entry name" value="DnaA regulatory inactivator Hda"/>
    <property type="match status" value="1"/>
</dbReference>
<dbReference type="Gene3D" id="1.10.8.60">
    <property type="match status" value="1"/>
</dbReference>
<dbReference type="Gene3D" id="3.40.50.300">
    <property type="entry name" value="P-loop containing nucleotide triphosphate hydrolases"/>
    <property type="match status" value="1"/>
</dbReference>
<dbReference type="HAMAP" id="MF_01158">
    <property type="entry name" value="Hda"/>
    <property type="match status" value="1"/>
</dbReference>
<dbReference type="InterPro" id="IPR020591">
    <property type="entry name" value="Chromosome_initiator_DnaA-like"/>
</dbReference>
<dbReference type="InterPro" id="IPR013317">
    <property type="entry name" value="DnaA_dom"/>
</dbReference>
<dbReference type="InterPro" id="IPR017788">
    <property type="entry name" value="Hda"/>
</dbReference>
<dbReference type="InterPro" id="IPR022864">
    <property type="entry name" value="Hda_Enterobact"/>
</dbReference>
<dbReference type="InterPro" id="IPR055199">
    <property type="entry name" value="Hda_lid"/>
</dbReference>
<dbReference type="InterPro" id="IPR027417">
    <property type="entry name" value="P-loop_NTPase"/>
</dbReference>
<dbReference type="NCBIfam" id="TIGR03420">
    <property type="entry name" value="DnaA_homol_Hda"/>
    <property type="match status" value="1"/>
</dbReference>
<dbReference type="NCBIfam" id="NF005982">
    <property type="entry name" value="PRK08084.1"/>
    <property type="match status" value="1"/>
</dbReference>
<dbReference type="PANTHER" id="PTHR30050">
    <property type="entry name" value="CHROMOSOMAL REPLICATION INITIATOR PROTEIN DNAA"/>
    <property type="match status" value="1"/>
</dbReference>
<dbReference type="PANTHER" id="PTHR30050:SF5">
    <property type="entry name" value="DNAA REGULATORY INACTIVATOR HDA"/>
    <property type="match status" value="1"/>
</dbReference>
<dbReference type="Pfam" id="PF00308">
    <property type="entry name" value="Bac_DnaA"/>
    <property type="match status" value="1"/>
</dbReference>
<dbReference type="Pfam" id="PF22688">
    <property type="entry name" value="Hda_lid"/>
    <property type="match status" value="1"/>
</dbReference>
<dbReference type="PRINTS" id="PR00051">
    <property type="entry name" value="DNAA"/>
</dbReference>
<dbReference type="SUPFAM" id="SSF52540">
    <property type="entry name" value="P-loop containing nucleoside triphosphate hydrolases"/>
    <property type="match status" value="1"/>
</dbReference>
<reference key="1">
    <citation type="journal article" date="2005" name="Nucleic Acids Res.">
        <title>The genome sequence of Salmonella enterica serovar Choleraesuis, a highly invasive and resistant zoonotic pathogen.</title>
        <authorList>
            <person name="Chiu C.-H."/>
            <person name="Tang P."/>
            <person name="Chu C."/>
            <person name="Hu S."/>
            <person name="Bao Q."/>
            <person name="Yu J."/>
            <person name="Chou Y.-Y."/>
            <person name="Wang H.-S."/>
            <person name="Lee Y.-S."/>
        </authorList>
    </citation>
    <scope>NUCLEOTIDE SEQUENCE [LARGE SCALE GENOMIC DNA]</scope>
    <source>
        <strain>SC-B67</strain>
    </source>
</reference>
<gene>
    <name evidence="2" type="primary">hda</name>
    <name type="ordered locus">SCH_2493</name>
</gene>
<feature type="chain" id="PRO_1000065564" description="DnaA regulatory inactivator Hda">
    <location>
        <begin position="1"/>
        <end position="241"/>
    </location>
</feature>
<proteinExistence type="inferred from homology"/>
<sequence length="241" mass="27472">MSSWVEVSLNTPAQLSLPLYLPDDETFASFWPGDNASLLAALQNVLRQEHSGYIYLWAREGAGRSHLLHAACAELSQRGDAVGYVPLDKRTWFVPEVLDGMEHLSLVCIDNIECVAGDELWEMAIFDLYNRILESGKTRLLITGDRPPRQLNLGLPDLASRLDWGQIYKLQPLSDEDKLQALQLRARLRGFELPEDVGRFLLKRLDREMRTLFMTLDQLDHASITAQRKLTIPFVKEILKL</sequence>
<evidence type="ECO:0000250" key="1"/>
<evidence type="ECO:0000255" key="2">
    <source>
        <dbReference type="HAMAP-Rule" id="MF_01158"/>
    </source>
</evidence>
<name>HDA_SALCH</name>
<organism>
    <name type="scientific">Salmonella choleraesuis (strain SC-B67)</name>
    <dbReference type="NCBI Taxonomy" id="321314"/>
    <lineage>
        <taxon>Bacteria</taxon>
        <taxon>Pseudomonadati</taxon>
        <taxon>Pseudomonadota</taxon>
        <taxon>Gammaproteobacteria</taxon>
        <taxon>Enterobacterales</taxon>
        <taxon>Enterobacteriaceae</taxon>
        <taxon>Salmonella</taxon>
    </lineage>
</organism>
<comment type="function">
    <text evidence="1">Mediates the interaction of DNA replication initiator protein DnaA with DNA polymerase subunit beta sliding clamp (dnaN). Stimulates hydrolysis of ATP-DnaA to ADP-DnaA, rendering DnaA inactive for reinitiation, a process called regulatory inhibition of DnaA or RIDA (By similarity).</text>
</comment>
<comment type="subunit">
    <text evidence="2">The active form seems to be an ADP-bound monomer. Forms the RIDA complex (regulatory inactivation of DnaA) of ATP-DnaA, ADP-Hda and the DNA-loaded beta sliding clamp (dnaN).</text>
</comment>
<comment type="similarity">
    <text evidence="2">Belongs to the DnaA family. HdA subfamily.</text>
</comment>
<protein>
    <recommendedName>
        <fullName evidence="2">DnaA regulatory inactivator Hda</fullName>
    </recommendedName>
</protein>
<accession>Q57LL3</accession>
<keyword id="KW-0235">DNA replication</keyword>
<keyword id="KW-0236">DNA replication inhibitor</keyword>